<accession>Q55778</accession>
<sequence length="483" mass="54008">MTVRVRIAPSPTGNLHIGTARTAVFNWLFARHTGGTFILRVEDTDLERSKAEYTENIQSGLQWLGLNWDEGPFFQTQRLDHYRKAIQQLLDQGLAYRCYCTSEELEQMREAQKAKNQAPRYDNRHRNLTPDQEQALRAEGRQPVIRFRIDDDRQIVWQDQIRGQVVWQGSDLGGDMVIARASENPEEAFGQPLYNLAVVVDDIDMAITHVIRGEDHIANTAKQILLYEALGGAVPTFAHTPLILNQEGKKLSKRDGVTSIDDFRAMGFLPQAIANYMCLLGWTPPDSTQEIFTLAEAAEQFSLERVNKAGAKFDWQKLDWINSQYLHALPAAELVPLLIPHLEAGGHQVDPDRDQAWLVGLATLIGPSLTRLTDAATESQLLFGDRLELKEDGQKQLAVEGAKAVLEAALTFSQNTPELTLDEAKGEINRLTKELGLKKGVVMKSLRAGLMGTVQGPDLLQSWLLLQQKGWATTRLTQAIAAE</sequence>
<name>SYE_SYNY3</name>
<keyword id="KW-0030">Aminoacyl-tRNA synthetase</keyword>
<keyword id="KW-0067">ATP-binding</keyword>
<keyword id="KW-0963">Cytoplasm</keyword>
<keyword id="KW-0436">Ligase</keyword>
<keyword id="KW-0547">Nucleotide-binding</keyword>
<keyword id="KW-0648">Protein biosynthesis</keyword>
<keyword id="KW-1185">Reference proteome</keyword>
<feature type="chain" id="PRO_0000119679" description="Glutamate--tRNA ligase">
    <location>
        <begin position="1"/>
        <end position="483"/>
    </location>
</feature>
<feature type="short sequence motif" description="'HIGH' region" evidence="1">
    <location>
        <begin position="9"/>
        <end position="19"/>
    </location>
</feature>
<feature type="short sequence motif" description="'KMSKS' region" evidence="1">
    <location>
        <begin position="250"/>
        <end position="254"/>
    </location>
</feature>
<feature type="binding site" evidence="1">
    <location>
        <position position="253"/>
    </location>
    <ligand>
        <name>ATP</name>
        <dbReference type="ChEBI" id="CHEBI:30616"/>
    </ligand>
</feature>
<proteinExistence type="inferred from homology"/>
<protein>
    <recommendedName>
        <fullName evidence="1">Glutamate--tRNA ligase</fullName>
        <ecNumber evidence="1">6.1.1.17</ecNumber>
    </recommendedName>
    <alternativeName>
        <fullName evidence="1">Glutamyl-tRNA synthetase</fullName>
        <shortName evidence="1">GluRS</shortName>
    </alternativeName>
</protein>
<dbReference type="EC" id="6.1.1.17" evidence="1"/>
<dbReference type="EMBL" id="BA000022">
    <property type="protein sequence ID" value="BAA10429.1"/>
    <property type="molecule type" value="Genomic_DNA"/>
</dbReference>
<dbReference type="PIR" id="S76583">
    <property type="entry name" value="S76583"/>
</dbReference>
<dbReference type="SMR" id="Q55778"/>
<dbReference type="FunCoup" id="Q55778">
    <property type="interactions" value="505"/>
</dbReference>
<dbReference type="STRING" id="1148.gene:10499930"/>
<dbReference type="PaxDb" id="1148-1001692"/>
<dbReference type="EnsemblBacteria" id="BAA10429">
    <property type="protein sequence ID" value="BAA10429"/>
    <property type="gene ID" value="BAA10429"/>
</dbReference>
<dbReference type="KEGG" id="syn:sll0179"/>
<dbReference type="eggNOG" id="COG0008">
    <property type="taxonomic scope" value="Bacteria"/>
</dbReference>
<dbReference type="InParanoid" id="Q55778"/>
<dbReference type="PhylomeDB" id="Q55778"/>
<dbReference type="Proteomes" id="UP000001425">
    <property type="component" value="Chromosome"/>
</dbReference>
<dbReference type="GO" id="GO:0005829">
    <property type="term" value="C:cytosol"/>
    <property type="evidence" value="ECO:0000318"/>
    <property type="project" value="GO_Central"/>
</dbReference>
<dbReference type="GO" id="GO:0005524">
    <property type="term" value="F:ATP binding"/>
    <property type="evidence" value="ECO:0007669"/>
    <property type="project" value="UniProtKB-UniRule"/>
</dbReference>
<dbReference type="GO" id="GO:0004818">
    <property type="term" value="F:glutamate-tRNA ligase activity"/>
    <property type="evidence" value="ECO:0000318"/>
    <property type="project" value="GO_Central"/>
</dbReference>
<dbReference type="GO" id="GO:0000049">
    <property type="term" value="F:tRNA binding"/>
    <property type="evidence" value="ECO:0007669"/>
    <property type="project" value="InterPro"/>
</dbReference>
<dbReference type="GO" id="GO:0008270">
    <property type="term" value="F:zinc ion binding"/>
    <property type="evidence" value="ECO:0007669"/>
    <property type="project" value="InterPro"/>
</dbReference>
<dbReference type="GO" id="GO:0006424">
    <property type="term" value="P:glutamyl-tRNA aminoacylation"/>
    <property type="evidence" value="ECO:0000318"/>
    <property type="project" value="GO_Central"/>
</dbReference>
<dbReference type="CDD" id="cd00808">
    <property type="entry name" value="GluRS_core"/>
    <property type="match status" value="1"/>
</dbReference>
<dbReference type="FunFam" id="3.40.50.620:FF:000007">
    <property type="entry name" value="Glutamate--tRNA ligase"/>
    <property type="match status" value="1"/>
</dbReference>
<dbReference type="FunFam" id="1.10.1160.10:FF:000003">
    <property type="entry name" value="Glutamate--tRNA ligase 2"/>
    <property type="match status" value="1"/>
</dbReference>
<dbReference type="Gene3D" id="1.10.10.350">
    <property type="match status" value="1"/>
</dbReference>
<dbReference type="Gene3D" id="1.10.8.70">
    <property type="entry name" value="Glutamate-tRNA synthetase, class I, anticodon-binding domain 1"/>
    <property type="match status" value="1"/>
</dbReference>
<dbReference type="Gene3D" id="1.10.1160.10">
    <property type="entry name" value="Glutamyl-trna Synthetase, Domain 2"/>
    <property type="match status" value="1"/>
</dbReference>
<dbReference type="Gene3D" id="3.90.800.10">
    <property type="entry name" value="Glutamyl-tRNA Synthetase, Domain 3"/>
    <property type="match status" value="1"/>
</dbReference>
<dbReference type="Gene3D" id="3.40.50.620">
    <property type="entry name" value="HUPs"/>
    <property type="match status" value="1"/>
</dbReference>
<dbReference type="HAMAP" id="MF_00022">
    <property type="entry name" value="Glu_tRNA_synth_type1"/>
    <property type="match status" value="1"/>
</dbReference>
<dbReference type="InterPro" id="IPR045462">
    <property type="entry name" value="aa-tRNA-synth_I_cd-bd"/>
</dbReference>
<dbReference type="InterPro" id="IPR020751">
    <property type="entry name" value="aa-tRNA-synth_I_codon-bd_sub2"/>
</dbReference>
<dbReference type="InterPro" id="IPR001412">
    <property type="entry name" value="aa-tRNA-synth_I_CS"/>
</dbReference>
<dbReference type="InterPro" id="IPR008925">
    <property type="entry name" value="aa_tRNA-synth_I_cd-bd_sf"/>
</dbReference>
<dbReference type="InterPro" id="IPR004527">
    <property type="entry name" value="Glu-tRNA-ligase_bac/mito"/>
</dbReference>
<dbReference type="InterPro" id="IPR020752">
    <property type="entry name" value="Glu-tRNA-synth_I_codon-bd_sub1"/>
</dbReference>
<dbReference type="InterPro" id="IPR000924">
    <property type="entry name" value="Glu/Gln-tRNA-synth"/>
</dbReference>
<dbReference type="InterPro" id="IPR020058">
    <property type="entry name" value="Glu/Gln-tRNA-synth_Ib_cat-dom"/>
</dbReference>
<dbReference type="InterPro" id="IPR020061">
    <property type="entry name" value="Glu_tRNA_lig_a-bdl"/>
</dbReference>
<dbReference type="InterPro" id="IPR049940">
    <property type="entry name" value="GluQ/Sye"/>
</dbReference>
<dbReference type="InterPro" id="IPR033910">
    <property type="entry name" value="GluRS_core"/>
</dbReference>
<dbReference type="InterPro" id="IPR014729">
    <property type="entry name" value="Rossmann-like_a/b/a_fold"/>
</dbReference>
<dbReference type="NCBIfam" id="TIGR00464">
    <property type="entry name" value="gltX_bact"/>
    <property type="match status" value="1"/>
</dbReference>
<dbReference type="NCBIfam" id="NF004315">
    <property type="entry name" value="PRK05710.1-4"/>
    <property type="match status" value="1"/>
</dbReference>
<dbReference type="PANTHER" id="PTHR43311">
    <property type="entry name" value="GLUTAMATE--TRNA LIGASE"/>
    <property type="match status" value="1"/>
</dbReference>
<dbReference type="PANTHER" id="PTHR43311:SF2">
    <property type="entry name" value="GLUTAMATE--TRNA LIGASE, MITOCHONDRIAL-RELATED"/>
    <property type="match status" value="1"/>
</dbReference>
<dbReference type="Pfam" id="PF19269">
    <property type="entry name" value="Anticodon_2"/>
    <property type="match status" value="1"/>
</dbReference>
<dbReference type="Pfam" id="PF00749">
    <property type="entry name" value="tRNA-synt_1c"/>
    <property type="match status" value="1"/>
</dbReference>
<dbReference type="PRINTS" id="PR00987">
    <property type="entry name" value="TRNASYNTHGLU"/>
</dbReference>
<dbReference type="SUPFAM" id="SSF48163">
    <property type="entry name" value="An anticodon-binding domain of class I aminoacyl-tRNA synthetases"/>
    <property type="match status" value="1"/>
</dbReference>
<dbReference type="SUPFAM" id="SSF52374">
    <property type="entry name" value="Nucleotidylyl transferase"/>
    <property type="match status" value="1"/>
</dbReference>
<dbReference type="PROSITE" id="PS00178">
    <property type="entry name" value="AA_TRNA_LIGASE_I"/>
    <property type="match status" value="1"/>
</dbReference>
<organism>
    <name type="scientific">Synechocystis sp. (strain ATCC 27184 / PCC 6803 / Kazusa)</name>
    <dbReference type="NCBI Taxonomy" id="1111708"/>
    <lineage>
        <taxon>Bacteria</taxon>
        <taxon>Bacillati</taxon>
        <taxon>Cyanobacteriota</taxon>
        <taxon>Cyanophyceae</taxon>
        <taxon>Synechococcales</taxon>
        <taxon>Merismopediaceae</taxon>
        <taxon>Synechocystis</taxon>
    </lineage>
</organism>
<reference key="1">
    <citation type="journal article" date="1995" name="DNA Res.">
        <title>Sequence analysis of the genome of the unicellular cyanobacterium Synechocystis sp. strain PCC6803. I. Sequence features in the 1 Mb region from map positions 64% to 92% of the genome.</title>
        <authorList>
            <person name="Kaneko T."/>
            <person name="Tanaka A."/>
            <person name="Sato S."/>
            <person name="Kotani H."/>
            <person name="Sazuka T."/>
            <person name="Miyajima N."/>
            <person name="Sugiura M."/>
            <person name="Tabata S."/>
        </authorList>
    </citation>
    <scope>NUCLEOTIDE SEQUENCE [LARGE SCALE GENOMIC DNA]</scope>
    <source>
        <strain>ATCC 27184 / PCC 6803 / N-1</strain>
    </source>
</reference>
<reference key="2">
    <citation type="journal article" date="1996" name="DNA Res.">
        <title>Sequence analysis of the genome of the unicellular cyanobacterium Synechocystis sp. strain PCC6803. II. Sequence determination of the entire genome and assignment of potential protein-coding regions.</title>
        <authorList>
            <person name="Kaneko T."/>
            <person name="Sato S."/>
            <person name="Kotani H."/>
            <person name="Tanaka A."/>
            <person name="Asamizu E."/>
            <person name="Nakamura Y."/>
            <person name="Miyajima N."/>
            <person name="Hirosawa M."/>
            <person name="Sugiura M."/>
            <person name="Sasamoto S."/>
            <person name="Kimura T."/>
            <person name="Hosouchi T."/>
            <person name="Matsuno A."/>
            <person name="Muraki A."/>
            <person name="Nakazaki N."/>
            <person name="Naruo K."/>
            <person name="Okumura S."/>
            <person name="Shimpo S."/>
            <person name="Takeuchi C."/>
            <person name="Wada T."/>
            <person name="Watanabe A."/>
            <person name="Yamada M."/>
            <person name="Yasuda M."/>
            <person name="Tabata S."/>
        </authorList>
    </citation>
    <scope>NUCLEOTIDE SEQUENCE [LARGE SCALE GENOMIC DNA]</scope>
    <source>
        <strain>ATCC 27184 / PCC 6803 / Kazusa</strain>
    </source>
</reference>
<comment type="function">
    <text evidence="1">Catalyzes the attachment of glutamate to tRNA(Glu) in a two-step reaction: glutamate is first activated by ATP to form Glu-AMP and then transferred to the acceptor end of tRNA(Glu).</text>
</comment>
<comment type="catalytic activity">
    <reaction evidence="1">
        <text>tRNA(Glu) + L-glutamate + ATP = L-glutamyl-tRNA(Glu) + AMP + diphosphate</text>
        <dbReference type="Rhea" id="RHEA:23540"/>
        <dbReference type="Rhea" id="RHEA-COMP:9663"/>
        <dbReference type="Rhea" id="RHEA-COMP:9680"/>
        <dbReference type="ChEBI" id="CHEBI:29985"/>
        <dbReference type="ChEBI" id="CHEBI:30616"/>
        <dbReference type="ChEBI" id="CHEBI:33019"/>
        <dbReference type="ChEBI" id="CHEBI:78442"/>
        <dbReference type="ChEBI" id="CHEBI:78520"/>
        <dbReference type="ChEBI" id="CHEBI:456215"/>
        <dbReference type="EC" id="6.1.1.17"/>
    </reaction>
</comment>
<comment type="subunit">
    <text evidence="1">Monomer.</text>
</comment>
<comment type="subcellular location">
    <subcellularLocation>
        <location evidence="1">Cytoplasm</location>
    </subcellularLocation>
</comment>
<comment type="similarity">
    <text evidence="1">Belongs to the class-I aminoacyl-tRNA synthetase family. Glutamate--tRNA ligase type 1 subfamily.</text>
</comment>
<gene>
    <name evidence="1" type="primary">gltX</name>
    <name type="ordered locus">sll0179</name>
</gene>
<evidence type="ECO:0000255" key="1">
    <source>
        <dbReference type="HAMAP-Rule" id="MF_00022"/>
    </source>
</evidence>